<gene>
    <name evidence="1" type="primary">uppP</name>
    <name type="synonym">bacA</name>
    <name type="ordered locus">MGAS10270_Spy0238</name>
</gene>
<sequence length="279" mass="31496">MLIIELLKAIFFGIIEGITEWLPVSSTGHLILVQEFIRLNQDKAFIEMFNIVIQLGAIIAVMLIYFERLNPFQPGKTAREVQLTWQLWLKVVIACIPSILIAVPLDNWFEAHFYFMVPIAIALIVYGIAFIWIEKQNAQQEPAVTDLARMSYKTAFFIGCFQVLSIVPGTSRSGATILGAIILGTSRTVAADFTFFLAIPTMFGYSGLKAVKFFLDGHHLDFAQVLILLVASLTAFVVSLLAIRFLTDYVKKHDFTIFGKYRIVLGSLLLIYSFFKFVF</sequence>
<protein>
    <recommendedName>
        <fullName evidence="1">Undecaprenyl-diphosphatase</fullName>
        <ecNumber evidence="1">3.6.1.27</ecNumber>
    </recommendedName>
    <alternativeName>
        <fullName evidence="1">Bacitracin resistance protein</fullName>
    </alternativeName>
    <alternativeName>
        <fullName evidence="1">Undecaprenyl pyrophosphate phosphatase</fullName>
    </alternativeName>
</protein>
<name>UPPP_STRPD</name>
<feature type="chain" id="PRO_0000250270" description="Undecaprenyl-diphosphatase">
    <location>
        <begin position="1"/>
        <end position="279"/>
    </location>
</feature>
<feature type="transmembrane region" description="Helical" evidence="1">
    <location>
        <begin position="2"/>
        <end position="22"/>
    </location>
</feature>
<feature type="transmembrane region" description="Helical" evidence="1">
    <location>
        <begin position="44"/>
        <end position="64"/>
    </location>
</feature>
<feature type="transmembrane region" description="Helical" evidence="1">
    <location>
        <begin position="85"/>
        <end position="105"/>
    </location>
</feature>
<feature type="transmembrane region" description="Helical" evidence="1">
    <location>
        <begin position="113"/>
        <end position="133"/>
    </location>
</feature>
<feature type="transmembrane region" description="Helical" evidence="1">
    <location>
        <begin position="163"/>
        <end position="183"/>
    </location>
</feature>
<feature type="transmembrane region" description="Helical" evidence="1">
    <location>
        <begin position="188"/>
        <end position="208"/>
    </location>
</feature>
<feature type="transmembrane region" description="Helical" evidence="1">
    <location>
        <begin position="223"/>
        <end position="243"/>
    </location>
</feature>
<feature type="transmembrane region" description="Helical" evidence="1">
    <location>
        <begin position="255"/>
        <end position="275"/>
    </location>
</feature>
<accession>Q1JIM0</accession>
<keyword id="KW-0046">Antibiotic resistance</keyword>
<keyword id="KW-1003">Cell membrane</keyword>
<keyword id="KW-0133">Cell shape</keyword>
<keyword id="KW-0961">Cell wall biogenesis/degradation</keyword>
<keyword id="KW-0378">Hydrolase</keyword>
<keyword id="KW-0472">Membrane</keyword>
<keyword id="KW-0573">Peptidoglycan synthesis</keyword>
<keyword id="KW-0812">Transmembrane</keyword>
<keyword id="KW-1133">Transmembrane helix</keyword>
<reference key="1">
    <citation type="journal article" date="2006" name="Proc. Natl. Acad. Sci. U.S.A.">
        <title>Molecular genetic anatomy of inter- and intraserotype variation in the human bacterial pathogen group A Streptococcus.</title>
        <authorList>
            <person name="Beres S.B."/>
            <person name="Richter E.W."/>
            <person name="Nagiec M.J."/>
            <person name="Sumby P."/>
            <person name="Porcella S.F."/>
            <person name="DeLeo F.R."/>
            <person name="Musser J.M."/>
        </authorList>
    </citation>
    <scope>NUCLEOTIDE SEQUENCE [LARGE SCALE GENOMIC DNA]</scope>
    <source>
        <strain>MGAS10270</strain>
    </source>
</reference>
<comment type="function">
    <text evidence="1">Catalyzes the dephosphorylation of undecaprenyl diphosphate (UPP). Confers resistance to bacitracin.</text>
</comment>
<comment type="catalytic activity">
    <reaction evidence="1">
        <text>di-trans,octa-cis-undecaprenyl diphosphate + H2O = di-trans,octa-cis-undecaprenyl phosphate + phosphate + H(+)</text>
        <dbReference type="Rhea" id="RHEA:28094"/>
        <dbReference type="ChEBI" id="CHEBI:15377"/>
        <dbReference type="ChEBI" id="CHEBI:15378"/>
        <dbReference type="ChEBI" id="CHEBI:43474"/>
        <dbReference type="ChEBI" id="CHEBI:58405"/>
        <dbReference type="ChEBI" id="CHEBI:60392"/>
        <dbReference type="EC" id="3.6.1.27"/>
    </reaction>
</comment>
<comment type="subcellular location">
    <subcellularLocation>
        <location evidence="1">Cell membrane</location>
        <topology evidence="1">Multi-pass membrane protein</topology>
    </subcellularLocation>
</comment>
<comment type="miscellaneous">
    <text>Bacitracin is thought to be involved in the inhibition of peptidoglycan synthesis by sequestering undecaprenyl diphosphate, thereby reducing the pool of lipid carrier available.</text>
</comment>
<comment type="similarity">
    <text evidence="1">Belongs to the UppP family.</text>
</comment>
<organism>
    <name type="scientific">Streptococcus pyogenes serotype M2 (strain MGAS10270)</name>
    <dbReference type="NCBI Taxonomy" id="370552"/>
    <lineage>
        <taxon>Bacteria</taxon>
        <taxon>Bacillati</taxon>
        <taxon>Bacillota</taxon>
        <taxon>Bacilli</taxon>
        <taxon>Lactobacillales</taxon>
        <taxon>Streptococcaceae</taxon>
        <taxon>Streptococcus</taxon>
    </lineage>
</organism>
<dbReference type="EC" id="3.6.1.27" evidence="1"/>
<dbReference type="EMBL" id="CP000260">
    <property type="protein sequence ID" value="ABF33303.1"/>
    <property type="molecule type" value="Genomic_DNA"/>
</dbReference>
<dbReference type="SMR" id="Q1JIM0"/>
<dbReference type="KEGG" id="sph:MGAS10270_Spy0238"/>
<dbReference type="HOGENOM" id="CLU_060296_2_0_9"/>
<dbReference type="Proteomes" id="UP000002436">
    <property type="component" value="Chromosome"/>
</dbReference>
<dbReference type="GO" id="GO:0005886">
    <property type="term" value="C:plasma membrane"/>
    <property type="evidence" value="ECO:0007669"/>
    <property type="project" value="UniProtKB-SubCell"/>
</dbReference>
<dbReference type="GO" id="GO:0050380">
    <property type="term" value="F:undecaprenyl-diphosphatase activity"/>
    <property type="evidence" value="ECO:0007669"/>
    <property type="project" value="UniProtKB-UniRule"/>
</dbReference>
<dbReference type="GO" id="GO:0071555">
    <property type="term" value="P:cell wall organization"/>
    <property type="evidence" value="ECO:0007669"/>
    <property type="project" value="UniProtKB-KW"/>
</dbReference>
<dbReference type="GO" id="GO:0009252">
    <property type="term" value="P:peptidoglycan biosynthetic process"/>
    <property type="evidence" value="ECO:0007669"/>
    <property type="project" value="UniProtKB-KW"/>
</dbReference>
<dbReference type="GO" id="GO:0008360">
    <property type="term" value="P:regulation of cell shape"/>
    <property type="evidence" value="ECO:0007669"/>
    <property type="project" value="UniProtKB-KW"/>
</dbReference>
<dbReference type="GO" id="GO:0046677">
    <property type="term" value="P:response to antibiotic"/>
    <property type="evidence" value="ECO:0007669"/>
    <property type="project" value="UniProtKB-UniRule"/>
</dbReference>
<dbReference type="HAMAP" id="MF_01006">
    <property type="entry name" value="Undec_diphosphatase"/>
    <property type="match status" value="1"/>
</dbReference>
<dbReference type="InterPro" id="IPR003824">
    <property type="entry name" value="UppP"/>
</dbReference>
<dbReference type="NCBIfam" id="NF001391">
    <property type="entry name" value="PRK00281.1-5"/>
    <property type="match status" value="1"/>
</dbReference>
<dbReference type="PANTHER" id="PTHR30622">
    <property type="entry name" value="UNDECAPRENYL-DIPHOSPHATASE"/>
    <property type="match status" value="1"/>
</dbReference>
<dbReference type="PANTHER" id="PTHR30622:SF3">
    <property type="entry name" value="UNDECAPRENYL-DIPHOSPHATASE"/>
    <property type="match status" value="1"/>
</dbReference>
<dbReference type="Pfam" id="PF02673">
    <property type="entry name" value="BacA"/>
    <property type="match status" value="1"/>
</dbReference>
<proteinExistence type="inferred from homology"/>
<evidence type="ECO:0000255" key="1">
    <source>
        <dbReference type="HAMAP-Rule" id="MF_01006"/>
    </source>
</evidence>